<evidence type="ECO:0000255" key="1">
    <source>
        <dbReference type="HAMAP-Rule" id="MF_01037"/>
    </source>
</evidence>
<keyword id="KW-0963">Cytoplasm</keyword>
<keyword id="KW-0274">FAD</keyword>
<keyword id="KW-0285">Flavoprotein</keyword>
<keyword id="KW-0489">Methyltransferase</keyword>
<keyword id="KW-0520">NAD</keyword>
<keyword id="KW-0521">NADP</keyword>
<keyword id="KW-1185">Reference proteome</keyword>
<keyword id="KW-0808">Transferase</keyword>
<keyword id="KW-0819">tRNA processing</keyword>
<accession>Q8REM9</accession>
<feature type="chain" id="PRO_0000117244" description="Methylenetetrahydrofolate--tRNA-(uracil-5-)-methyltransferase TrmFO">
    <location>
        <begin position="1"/>
        <end position="434"/>
    </location>
</feature>
<feature type="binding site" evidence="1">
    <location>
        <begin position="9"/>
        <end position="14"/>
    </location>
    <ligand>
        <name>FAD</name>
        <dbReference type="ChEBI" id="CHEBI:57692"/>
    </ligand>
</feature>
<reference key="1">
    <citation type="journal article" date="2002" name="J. Bacteriol.">
        <title>Genome sequence and analysis of the oral bacterium Fusobacterium nucleatum strain ATCC 25586.</title>
        <authorList>
            <person name="Kapatral V."/>
            <person name="Anderson I."/>
            <person name="Ivanova N."/>
            <person name="Reznik G."/>
            <person name="Los T."/>
            <person name="Lykidis A."/>
            <person name="Bhattacharyya A."/>
            <person name="Bartman A."/>
            <person name="Gardner W."/>
            <person name="Grechkin G."/>
            <person name="Zhu L."/>
            <person name="Vasieva O."/>
            <person name="Chu L."/>
            <person name="Kogan Y."/>
            <person name="Chaga O."/>
            <person name="Goltsman E."/>
            <person name="Bernal A."/>
            <person name="Larsen N."/>
            <person name="D'Souza M."/>
            <person name="Walunas T."/>
            <person name="Pusch G."/>
            <person name="Haselkorn R."/>
            <person name="Fonstein M."/>
            <person name="Kyrpides N.C."/>
            <person name="Overbeek R."/>
        </authorList>
    </citation>
    <scope>NUCLEOTIDE SEQUENCE [LARGE SCALE GENOMIC DNA]</scope>
    <source>
        <strain>ATCC 25586 / DSM 15643 / BCRC 10681 / CIP 101130 / JCM 8532 / KCTC 2640 / LMG 13131 / VPI 4355</strain>
    </source>
</reference>
<gene>
    <name evidence="1" type="primary">trmFO</name>
    <name type="synonym">gid</name>
    <name type="ordered locus">FN1070</name>
</gene>
<protein>
    <recommendedName>
        <fullName evidence="1">Methylenetetrahydrofolate--tRNA-(uracil-5-)-methyltransferase TrmFO</fullName>
        <ecNumber evidence="1">2.1.1.74</ecNumber>
    </recommendedName>
    <alternativeName>
        <fullName evidence="1">Folate-dependent tRNA (uracil-5-)-methyltransferase</fullName>
    </alternativeName>
    <alternativeName>
        <fullName evidence="1">Folate-dependent tRNA(M-5-U54)-methyltransferase</fullName>
    </alternativeName>
</protein>
<sequence length="434" mass="49109">MEKEVIVVGAGLAGSEAAYQLAKRGIKVKLYEMKAKKKTPAHSKDYFSELVCSNSLGSDSLENASGLMKEELRILGSLLIEVADKNRVPAGQALAVDRDGFSEEVTKILKNTKNIEIIEEEFTEFPNDKIVIIASGPLTSDKLFQKISEITGEESLYFYDAAAPIVTFESIDMNKAYFQSRYGKGDGEYINCPMNKEEYYNFYNELIKAERAELKNFEKEKLFDACMPIEKIAMSGEKTMTFGPLKPKGLINPKTEKMDYAVVQLRQDDKEGKLYNIVGFQTNLKFGEQKRVFSMIPGLENAEFIRYGVMHRNTFINSTKLLDKTLKLKNKDNIYFAGQITGGEGYVTAIATGMYVAMNVANRLENKEEFILEDISEIGAIVNYITEEKKKFQPMGANFGIIRSLDENIRDKKEKYRKLSERAIEYLKNSIKGV</sequence>
<dbReference type="EC" id="2.1.1.74" evidence="1"/>
<dbReference type="EMBL" id="AE009951">
    <property type="protein sequence ID" value="AAL95266.1"/>
    <property type="molecule type" value="Genomic_DNA"/>
</dbReference>
<dbReference type="RefSeq" id="NP_603967.1">
    <property type="nucleotide sequence ID" value="NC_003454.1"/>
</dbReference>
<dbReference type="RefSeq" id="WP_011016878.1">
    <property type="nucleotide sequence ID" value="NZ_CP028101.1"/>
</dbReference>
<dbReference type="SMR" id="Q8REM9"/>
<dbReference type="FunCoup" id="Q8REM9">
    <property type="interactions" value="10"/>
</dbReference>
<dbReference type="STRING" id="190304.FN1070"/>
<dbReference type="PaxDb" id="190304-FN1070"/>
<dbReference type="EnsemblBacteria" id="AAL95266">
    <property type="protein sequence ID" value="AAL95266"/>
    <property type="gene ID" value="FN1070"/>
</dbReference>
<dbReference type="GeneID" id="79784051"/>
<dbReference type="KEGG" id="fnu:FN1070"/>
<dbReference type="PATRIC" id="fig|190304.8.peg.1635"/>
<dbReference type="eggNOG" id="COG1206">
    <property type="taxonomic scope" value="Bacteria"/>
</dbReference>
<dbReference type="HOGENOM" id="CLU_033057_1_0_0"/>
<dbReference type="InParanoid" id="Q8REM9"/>
<dbReference type="BioCyc" id="FNUC190304:G1FZS-1651-MONOMER"/>
<dbReference type="Proteomes" id="UP000002521">
    <property type="component" value="Chromosome"/>
</dbReference>
<dbReference type="GO" id="GO:0005829">
    <property type="term" value="C:cytosol"/>
    <property type="evidence" value="ECO:0000318"/>
    <property type="project" value="GO_Central"/>
</dbReference>
<dbReference type="GO" id="GO:0050660">
    <property type="term" value="F:flavin adenine dinucleotide binding"/>
    <property type="evidence" value="ECO:0000318"/>
    <property type="project" value="GO_Central"/>
</dbReference>
<dbReference type="GO" id="GO:0047151">
    <property type="term" value="F:tRNA (uracil(54)-C5)-methyltransferase activity, 5,10-methylenetetrahydrofolate-dependent"/>
    <property type="evidence" value="ECO:0007669"/>
    <property type="project" value="UniProtKB-UniRule"/>
</dbReference>
<dbReference type="GO" id="GO:0030488">
    <property type="term" value="P:tRNA methylation"/>
    <property type="evidence" value="ECO:0000318"/>
    <property type="project" value="GO_Central"/>
</dbReference>
<dbReference type="GO" id="GO:0002098">
    <property type="term" value="P:tRNA wobble uridine modification"/>
    <property type="evidence" value="ECO:0000318"/>
    <property type="project" value="GO_Central"/>
</dbReference>
<dbReference type="FunFam" id="3.50.50.60:FF:000040">
    <property type="entry name" value="Methylenetetrahydrofolate--tRNA-(uracil-5-)-methyltransferase TrmFO"/>
    <property type="match status" value="1"/>
</dbReference>
<dbReference type="FunFam" id="3.50.50.60:FF:000412">
    <property type="entry name" value="Methylenetetrahydrofolate--tRNA-(uracil-5-)-methyltransferase TrmFO"/>
    <property type="match status" value="1"/>
</dbReference>
<dbReference type="Gene3D" id="3.50.50.60">
    <property type="entry name" value="FAD/NAD(P)-binding domain"/>
    <property type="match status" value="2"/>
</dbReference>
<dbReference type="HAMAP" id="MF_01037">
    <property type="entry name" value="TrmFO"/>
    <property type="match status" value="1"/>
</dbReference>
<dbReference type="InterPro" id="IPR036188">
    <property type="entry name" value="FAD/NAD-bd_sf"/>
</dbReference>
<dbReference type="InterPro" id="IPR002218">
    <property type="entry name" value="MnmG-rel"/>
</dbReference>
<dbReference type="InterPro" id="IPR040131">
    <property type="entry name" value="MnmG_N"/>
</dbReference>
<dbReference type="InterPro" id="IPR004417">
    <property type="entry name" value="TrmFO"/>
</dbReference>
<dbReference type="NCBIfam" id="TIGR00137">
    <property type="entry name" value="gid_trmFO"/>
    <property type="match status" value="1"/>
</dbReference>
<dbReference type="NCBIfam" id="NF003739">
    <property type="entry name" value="PRK05335.1"/>
    <property type="match status" value="1"/>
</dbReference>
<dbReference type="PANTHER" id="PTHR11806">
    <property type="entry name" value="GLUCOSE INHIBITED DIVISION PROTEIN A"/>
    <property type="match status" value="1"/>
</dbReference>
<dbReference type="PANTHER" id="PTHR11806:SF2">
    <property type="entry name" value="METHYLENETETRAHYDROFOLATE--TRNA-(URACIL-5-)-METHYLTRANSFERASE TRMFO"/>
    <property type="match status" value="1"/>
</dbReference>
<dbReference type="Pfam" id="PF01134">
    <property type="entry name" value="GIDA"/>
    <property type="match status" value="1"/>
</dbReference>
<dbReference type="PRINTS" id="PR00411">
    <property type="entry name" value="PNDRDTASEI"/>
</dbReference>
<dbReference type="SUPFAM" id="SSF51905">
    <property type="entry name" value="FAD/NAD(P)-binding domain"/>
    <property type="match status" value="1"/>
</dbReference>
<name>TRMFO_FUSNN</name>
<comment type="function">
    <text evidence="1">Catalyzes the folate-dependent formation of 5-methyl-uridine at position 54 (M-5-U54) in all tRNAs.</text>
</comment>
<comment type="catalytic activity">
    <reaction evidence="1">
        <text>uridine(54) in tRNA + (6R)-5,10-methylene-5,6,7,8-tetrahydrofolate + NADH + H(+) = 5-methyluridine(54) in tRNA + (6S)-5,6,7,8-tetrahydrofolate + NAD(+)</text>
        <dbReference type="Rhea" id="RHEA:16873"/>
        <dbReference type="Rhea" id="RHEA-COMP:10167"/>
        <dbReference type="Rhea" id="RHEA-COMP:10193"/>
        <dbReference type="ChEBI" id="CHEBI:15378"/>
        <dbReference type="ChEBI" id="CHEBI:15636"/>
        <dbReference type="ChEBI" id="CHEBI:57453"/>
        <dbReference type="ChEBI" id="CHEBI:57540"/>
        <dbReference type="ChEBI" id="CHEBI:57945"/>
        <dbReference type="ChEBI" id="CHEBI:65315"/>
        <dbReference type="ChEBI" id="CHEBI:74447"/>
        <dbReference type="EC" id="2.1.1.74"/>
    </reaction>
</comment>
<comment type="catalytic activity">
    <reaction evidence="1">
        <text>uridine(54) in tRNA + (6R)-5,10-methylene-5,6,7,8-tetrahydrofolate + NADPH + H(+) = 5-methyluridine(54) in tRNA + (6S)-5,6,7,8-tetrahydrofolate + NADP(+)</text>
        <dbReference type="Rhea" id="RHEA:62372"/>
        <dbReference type="Rhea" id="RHEA-COMP:10167"/>
        <dbReference type="Rhea" id="RHEA-COMP:10193"/>
        <dbReference type="ChEBI" id="CHEBI:15378"/>
        <dbReference type="ChEBI" id="CHEBI:15636"/>
        <dbReference type="ChEBI" id="CHEBI:57453"/>
        <dbReference type="ChEBI" id="CHEBI:57783"/>
        <dbReference type="ChEBI" id="CHEBI:58349"/>
        <dbReference type="ChEBI" id="CHEBI:65315"/>
        <dbReference type="ChEBI" id="CHEBI:74447"/>
        <dbReference type="EC" id="2.1.1.74"/>
    </reaction>
</comment>
<comment type="cofactor">
    <cofactor evidence="1">
        <name>FAD</name>
        <dbReference type="ChEBI" id="CHEBI:57692"/>
    </cofactor>
</comment>
<comment type="subcellular location">
    <subcellularLocation>
        <location evidence="1">Cytoplasm</location>
    </subcellularLocation>
</comment>
<comment type="similarity">
    <text evidence="1">Belongs to the MnmG family. TrmFO subfamily.</text>
</comment>
<proteinExistence type="inferred from homology"/>
<organism>
    <name type="scientific">Fusobacterium nucleatum subsp. nucleatum (strain ATCC 25586 / DSM 15643 / BCRC 10681 / CIP 101130 / JCM 8532 / KCTC 2640 / LMG 13131 / VPI 4355)</name>
    <dbReference type="NCBI Taxonomy" id="190304"/>
    <lineage>
        <taxon>Bacteria</taxon>
        <taxon>Fusobacteriati</taxon>
        <taxon>Fusobacteriota</taxon>
        <taxon>Fusobacteriia</taxon>
        <taxon>Fusobacteriales</taxon>
        <taxon>Fusobacteriaceae</taxon>
        <taxon>Fusobacterium</taxon>
    </lineage>
</organism>